<feature type="chain" id="PRO_1000096814" description="Phosphopantetheine adenylyltransferase">
    <location>
        <begin position="1"/>
        <end position="166"/>
    </location>
</feature>
<feature type="binding site" evidence="1">
    <location>
        <begin position="10"/>
        <end position="11"/>
    </location>
    <ligand>
        <name>ATP</name>
        <dbReference type="ChEBI" id="CHEBI:30616"/>
    </ligand>
</feature>
<feature type="binding site" evidence="1">
    <location>
        <position position="10"/>
    </location>
    <ligand>
        <name>substrate</name>
    </ligand>
</feature>
<feature type="binding site" evidence="1">
    <location>
        <position position="18"/>
    </location>
    <ligand>
        <name>ATP</name>
        <dbReference type="ChEBI" id="CHEBI:30616"/>
    </ligand>
</feature>
<feature type="binding site" evidence="1">
    <location>
        <position position="42"/>
    </location>
    <ligand>
        <name>substrate</name>
    </ligand>
</feature>
<feature type="binding site" evidence="1">
    <location>
        <position position="79"/>
    </location>
    <ligand>
        <name>substrate</name>
    </ligand>
</feature>
<feature type="binding site" evidence="1">
    <location>
        <position position="93"/>
    </location>
    <ligand>
        <name>substrate</name>
    </ligand>
</feature>
<feature type="binding site" evidence="1">
    <location>
        <begin position="94"/>
        <end position="96"/>
    </location>
    <ligand>
        <name>ATP</name>
        <dbReference type="ChEBI" id="CHEBI:30616"/>
    </ligand>
</feature>
<feature type="binding site" evidence="1">
    <location>
        <position position="104"/>
    </location>
    <ligand>
        <name>ATP</name>
        <dbReference type="ChEBI" id="CHEBI:30616"/>
    </ligand>
</feature>
<feature type="binding site" evidence="1">
    <location>
        <begin position="129"/>
        <end position="135"/>
    </location>
    <ligand>
        <name>ATP</name>
        <dbReference type="ChEBI" id="CHEBI:30616"/>
    </ligand>
</feature>
<feature type="site" description="Transition state stabilizer" evidence="1">
    <location>
        <position position="18"/>
    </location>
</feature>
<reference key="1">
    <citation type="submission" date="2008-02" db="EMBL/GenBank/DDBJ databases">
        <title>Complete sequence of chromosome of Methylobacterium sp. 4-46.</title>
        <authorList>
            <consortium name="US DOE Joint Genome Institute"/>
            <person name="Copeland A."/>
            <person name="Lucas S."/>
            <person name="Lapidus A."/>
            <person name="Glavina del Rio T."/>
            <person name="Dalin E."/>
            <person name="Tice H."/>
            <person name="Bruce D."/>
            <person name="Goodwin L."/>
            <person name="Pitluck S."/>
            <person name="Chertkov O."/>
            <person name="Brettin T."/>
            <person name="Detter J.C."/>
            <person name="Han C."/>
            <person name="Kuske C.R."/>
            <person name="Schmutz J."/>
            <person name="Larimer F."/>
            <person name="Land M."/>
            <person name="Hauser L."/>
            <person name="Kyrpides N."/>
            <person name="Ivanova N."/>
            <person name="Marx C.J."/>
            <person name="Richardson P."/>
        </authorList>
    </citation>
    <scope>NUCLEOTIDE SEQUENCE [LARGE SCALE GENOMIC DNA]</scope>
    <source>
        <strain>4-46</strain>
    </source>
</reference>
<proteinExistence type="inferred from homology"/>
<name>COAD_METS4</name>
<keyword id="KW-0067">ATP-binding</keyword>
<keyword id="KW-0173">Coenzyme A biosynthesis</keyword>
<keyword id="KW-0963">Cytoplasm</keyword>
<keyword id="KW-0460">Magnesium</keyword>
<keyword id="KW-0547">Nucleotide-binding</keyword>
<keyword id="KW-0548">Nucleotidyltransferase</keyword>
<keyword id="KW-0808">Transferase</keyword>
<accession>B0UP59</accession>
<sequence>MNRTALYAGSFDPVTNGHVDVIRQACRLVPRLVIAIGVHPGKTPLFGAEERAELLREICAPLAAAEGAALDVVTFDDLAVSAARRVGASLFIRGLRDGTDLDYEMQLAGMNGAMAPEVQTVFLPASTGVRPITATLVRQIAAMGGDVRPFVPDLVAERLRARFAKP</sequence>
<protein>
    <recommendedName>
        <fullName evidence="1">Phosphopantetheine adenylyltransferase</fullName>
        <ecNumber evidence="1">2.7.7.3</ecNumber>
    </recommendedName>
    <alternativeName>
        <fullName evidence="1">Dephospho-CoA pyrophosphorylase</fullName>
    </alternativeName>
    <alternativeName>
        <fullName evidence="1">Pantetheine-phosphate adenylyltransferase</fullName>
        <shortName evidence="1">PPAT</shortName>
    </alternativeName>
</protein>
<gene>
    <name evidence="1" type="primary">coaD</name>
    <name type="ordered locus">M446_4459</name>
</gene>
<evidence type="ECO:0000255" key="1">
    <source>
        <dbReference type="HAMAP-Rule" id="MF_00151"/>
    </source>
</evidence>
<organism>
    <name type="scientific">Methylobacterium sp. (strain 4-46)</name>
    <dbReference type="NCBI Taxonomy" id="426117"/>
    <lineage>
        <taxon>Bacteria</taxon>
        <taxon>Pseudomonadati</taxon>
        <taxon>Pseudomonadota</taxon>
        <taxon>Alphaproteobacteria</taxon>
        <taxon>Hyphomicrobiales</taxon>
        <taxon>Methylobacteriaceae</taxon>
        <taxon>Methylobacterium</taxon>
    </lineage>
</organism>
<dbReference type="EC" id="2.7.7.3" evidence="1"/>
<dbReference type="EMBL" id="CP000943">
    <property type="protein sequence ID" value="ACA18800.1"/>
    <property type="molecule type" value="Genomic_DNA"/>
</dbReference>
<dbReference type="RefSeq" id="WP_012334189.1">
    <property type="nucleotide sequence ID" value="NC_010511.1"/>
</dbReference>
<dbReference type="SMR" id="B0UP59"/>
<dbReference type="STRING" id="426117.M446_4459"/>
<dbReference type="KEGG" id="met:M446_4459"/>
<dbReference type="eggNOG" id="COG0669">
    <property type="taxonomic scope" value="Bacteria"/>
</dbReference>
<dbReference type="HOGENOM" id="CLU_100149_0_1_5"/>
<dbReference type="UniPathway" id="UPA00241">
    <property type="reaction ID" value="UER00355"/>
</dbReference>
<dbReference type="GO" id="GO:0005737">
    <property type="term" value="C:cytoplasm"/>
    <property type="evidence" value="ECO:0007669"/>
    <property type="project" value="UniProtKB-SubCell"/>
</dbReference>
<dbReference type="GO" id="GO:0005524">
    <property type="term" value="F:ATP binding"/>
    <property type="evidence" value="ECO:0007669"/>
    <property type="project" value="UniProtKB-KW"/>
</dbReference>
<dbReference type="GO" id="GO:0004595">
    <property type="term" value="F:pantetheine-phosphate adenylyltransferase activity"/>
    <property type="evidence" value="ECO:0007669"/>
    <property type="project" value="UniProtKB-UniRule"/>
</dbReference>
<dbReference type="GO" id="GO:0015937">
    <property type="term" value="P:coenzyme A biosynthetic process"/>
    <property type="evidence" value="ECO:0007669"/>
    <property type="project" value="UniProtKB-UniRule"/>
</dbReference>
<dbReference type="CDD" id="cd02163">
    <property type="entry name" value="PPAT"/>
    <property type="match status" value="1"/>
</dbReference>
<dbReference type="Gene3D" id="3.40.50.620">
    <property type="entry name" value="HUPs"/>
    <property type="match status" value="1"/>
</dbReference>
<dbReference type="HAMAP" id="MF_00151">
    <property type="entry name" value="PPAT_bact"/>
    <property type="match status" value="1"/>
</dbReference>
<dbReference type="InterPro" id="IPR004821">
    <property type="entry name" value="Cyt_trans-like"/>
</dbReference>
<dbReference type="InterPro" id="IPR001980">
    <property type="entry name" value="PPAT"/>
</dbReference>
<dbReference type="InterPro" id="IPR014729">
    <property type="entry name" value="Rossmann-like_a/b/a_fold"/>
</dbReference>
<dbReference type="NCBIfam" id="TIGR01510">
    <property type="entry name" value="coaD_prev_kdtB"/>
    <property type="match status" value="1"/>
</dbReference>
<dbReference type="NCBIfam" id="TIGR00125">
    <property type="entry name" value="cyt_tran_rel"/>
    <property type="match status" value="1"/>
</dbReference>
<dbReference type="PANTHER" id="PTHR21342">
    <property type="entry name" value="PHOSPHOPANTETHEINE ADENYLYLTRANSFERASE"/>
    <property type="match status" value="1"/>
</dbReference>
<dbReference type="PANTHER" id="PTHR21342:SF1">
    <property type="entry name" value="PHOSPHOPANTETHEINE ADENYLYLTRANSFERASE"/>
    <property type="match status" value="1"/>
</dbReference>
<dbReference type="Pfam" id="PF01467">
    <property type="entry name" value="CTP_transf_like"/>
    <property type="match status" value="1"/>
</dbReference>
<dbReference type="PRINTS" id="PR01020">
    <property type="entry name" value="LPSBIOSNTHSS"/>
</dbReference>
<dbReference type="SUPFAM" id="SSF52374">
    <property type="entry name" value="Nucleotidylyl transferase"/>
    <property type="match status" value="1"/>
</dbReference>
<comment type="function">
    <text evidence="1">Reversibly transfers an adenylyl group from ATP to 4'-phosphopantetheine, yielding dephospho-CoA (dPCoA) and pyrophosphate.</text>
</comment>
<comment type="catalytic activity">
    <reaction evidence="1">
        <text>(R)-4'-phosphopantetheine + ATP + H(+) = 3'-dephospho-CoA + diphosphate</text>
        <dbReference type="Rhea" id="RHEA:19801"/>
        <dbReference type="ChEBI" id="CHEBI:15378"/>
        <dbReference type="ChEBI" id="CHEBI:30616"/>
        <dbReference type="ChEBI" id="CHEBI:33019"/>
        <dbReference type="ChEBI" id="CHEBI:57328"/>
        <dbReference type="ChEBI" id="CHEBI:61723"/>
        <dbReference type="EC" id="2.7.7.3"/>
    </reaction>
</comment>
<comment type="cofactor">
    <cofactor evidence="1">
        <name>Mg(2+)</name>
        <dbReference type="ChEBI" id="CHEBI:18420"/>
    </cofactor>
</comment>
<comment type="pathway">
    <text evidence="1">Cofactor biosynthesis; coenzyme A biosynthesis; CoA from (R)-pantothenate: step 4/5.</text>
</comment>
<comment type="subunit">
    <text evidence="1">Homohexamer.</text>
</comment>
<comment type="subcellular location">
    <subcellularLocation>
        <location evidence="1">Cytoplasm</location>
    </subcellularLocation>
</comment>
<comment type="similarity">
    <text evidence="1">Belongs to the bacterial CoaD family.</text>
</comment>